<name>EFTS_CORA7</name>
<protein>
    <recommendedName>
        <fullName evidence="1">Elongation factor Ts</fullName>
        <shortName evidence="1">EF-Ts</shortName>
    </recommendedName>
</protein>
<sequence length="270" mass="28960">MANYTAADVKALREATGAGMLDCKKALDESQGDYDKAVEYLRIKGAKNVSKRAEREATEGLIAVSGNTMVEINCETDFVAKNEAFKSFASKIAEAAGEAKVNSGEELNNLEIDGKKVSEVVDEESAKTGEKLQARRAVTIEGDNVAVYLHQRSADLPPAVGVLVSYEGNAEGAHAVALQIAAMNAEYLTREDIPAEIVEKEREIAEATTREEGKPEAALPKIVEGRLNGFYKSVVLLEQASLSDSKKTVKQVADEAGTTITGFVRYEVGA</sequence>
<dbReference type="EMBL" id="CP001601">
    <property type="protein sequence ID" value="ACP33154.1"/>
    <property type="molecule type" value="Genomic_DNA"/>
</dbReference>
<dbReference type="RefSeq" id="WP_010190381.1">
    <property type="nucleotide sequence ID" value="NC_012590.1"/>
</dbReference>
<dbReference type="SMR" id="C3PH50"/>
<dbReference type="STRING" id="548476.cauri_1561"/>
<dbReference type="GeneID" id="31924191"/>
<dbReference type="KEGG" id="car:cauri_1561"/>
<dbReference type="eggNOG" id="COG0264">
    <property type="taxonomic scope" value="Bacteria"/>
</dbReference>
<dbReference type="HOGENOM" id="CLU_047155_0_0_11"/>
<dbReference type="OrthoDB" id="9808348at2"/>
<dbReference type="Proteomes" id="UP000002077">
    <property type="component" value="Chromosome"/>
</dbReference>
<dbReference type="GO" id="GO:0005737">
    <property type="term" value="C:cytoplasm"/>
    <property type="evidence" value="ECO:0007669"/>
    <property type="project" value="UniProtKB-SubCell"/>
</dbReference>
<dbReference type="GO" id="GO:0003746">
    <property type="term" value="F:translation elongation factor activity"/>
    <property type="evidence" value="ECO:0007669"/>
    <property type="project" value="UniProtKB-UniRule"/>
</dbReference>
<dbReference type="CDD" id="cd14275">
    <property type="entry name" value="UBA_EF-Ts"/>
    <property type="match status" value="1"/>
</dbReference>
<dbReference type="FunFam" id="1.10.286.20:FF:000001">
    <property type="entry name" value="Elongation factor Ts"/>
    <property type="match status" value="1"/>
</dbReference>
<dbReference type="FunFam" id="1.10.8.10:FF:000001">
    <property type="entry name" value="Elongation factor Ts"/>
    <property type="match status" value="1"/>
</dbReference>
<dbReference type="Gene3D" id="1.10.286.20">
    <property type="match status" value="1"/>
</dbReference>
<dbReference type="Gene3D" id="1.10.8.10">
    <property type="entry name" value="DNA helicase RuvA subunit, C-terminal domain"/>
    <property type="match status" value="1"/>
</dbReference>
<dbReference type="Gene3D" id="3.30.479.20">
    <property type="entry name" value="Elongation factor Ts, dimerisation domain"/>
    <property type="match status" value="2"/>
</dbReference>
<dbReference type="HAMAP" id="MF_00050">
    <property type="entry name" value="EF_Ts"/>
    <property type="match status" value="1"/>
</dbReference>
<dbReference type="InterPro" id="IPR036402">
    <property type="entry name" value="EF-Ts_dimer_sf"/>
</dbReference>
<dbReference type="InterPro" id="IPR001816">
    <property type="entry name" value="Transl_elong_EFTs/EF1B"/>
</dbReference>
<dbReference type="InterPro" id="IPR014039">
    <property type="entry name" value="Transl_elong_EFTs/EF1B_dimer"/>
</dbReference>
<dbReference type="InterPro" id="IPR018101">
    <property type="entry name" value="Transl_elong_Ts_CS"/>
</dbReference>
<dbReference type="InterPro" id="IPR009060">
    <property type="entry name" value="UBA-like_sf"/>
</dbReference>
<dbReference type="NCBIfam" id="TIGR00116">
    <property type="entry name" value="tsf"/>
    <property type="match status" value="1"/>
</dbReference>
<dbReference type="PANTHER" id="PTHR11741">
    <property type="entry name" value="ELONGATION FACTOR TS"/>
    <property type="match status" value="1"/>
</dbReference>
<dbReference type="PANTHER" id="PTHR11741:SF0">
    <property type="entry name" value="ELONGATION FACTOR TS, MITOCHONDRIAL"/>
    <property type="match status" value="1"/>
</dbReference>
<dbReference type="Pfam" id="PF00889">
    <property type="entry name" value="EF_TS"/>
    <property type="match status" value="1"/>
</dbReference>
<dbReference type="SUPFAM" id="SSF54713">
    <property type="entry name" value="Elongation factor Ts (EF-Ts), dimerisation domain"/>
    <property type="match status" value="1"/>
</dbReference>
<dbReference type="SUPFAM" id="SSF46934">
    <property type="entry name" value="UBA-like"/>
    <property type="match status" value="1"/>
</dbReference>
<dbReference type="PROSITE" id="PS01126">
    <property type="entry name" value="EF_TS_1"/>
    <property type="match status" value="1"/>
</dbReference>
<dbReference type="PROSITE" id="PS01127">
    <property type="entry name" value="EF_TS_2"/>
    <property type="match status" value="1"/>
</dbReference>
<organism>
    <name type="scientific">Corynebacterium aurimucosum (strain ATCC 700975 / DSM 44827 / CIP 107346 / CN-1)</name>
    <name type="common">Corynebacterium nigricans</name>
    <dbReference type="NCBI Taxonomy" id="548476"/>
    <lineage>
        <taxon>Bacteria</taxon>
        <taxon>Bacillati</taxon>
        <taxon>Actinomycetota</taxon>
        <taxon>Actinomycetes</taxon>
        <taxon>Mycobacteriales</taxon>
        <taxon>Corynebacteriaceae</taxon>
        <taxon>Corynebacterium</taxon>
    </lineage>
</organism>
<reference key="1">
    <citation type="journal article" date="2010" name="BMC Genomics">
        <title>Complete genome sequence and lifestyle of black-pigmented Corynebacterium aurimucosum ATCC 700975 (formerly C. nigricans CN-1) isolated from a vaginal swab of a woman with spontaneous abortion.</title>
        <authorList>
            <person name="Trost E."/>
            <person name="Gotker S."/>
            <person name="Schneider J."/>
            <person name="Schneiker-Bekel S."/>
            <person name="Szczepanowski R."/>
            <person name="Tilker A."/>
            <person name="Viehoever P."/>
            <person name="Arnold W."/>
            <person name="Bekel T."/>
            <person name="Blom J."/>
            <person name="Gartemann K.H."/>
            <person name="Linke B."/>
            <person name="Goesmann A."/>
            <person name="Puhler A."/>
            <person name="Shukla S.K."/>
            <person name="Tauch A."/>
        </authorList>
    </citation>
    <scope>NUCLEOTIDE SEQUENCE [LARGE SCALE GENOMIC DNA]</scope>
    <source>
        <strain>ATCC 700975 / DSM 44827 / CIP 107346 / CN-1</strain>
    </source>
</reference>
<accession>C3PH50</accession>
<feature type="chain" id="PRO_1000189872" description="Elongation factor Ts">
    <location>
        <begin position="1"/>
        <end position="270"/>
    </location>
</feature>
<feature type="region of interest" description="Involved in Mg(2+) ion dislocation from EF-Tu" evidence="1">
    <location>
        <begin position="76"/>
        <end position="79"/>
    </location>
</feature>
<proteinExistence type="inferred from homology"/>
<comment type="function">
    <text evidence="1">Associates with the EF-Tu.GDP complex and induces the exchange of GDP to GTP. It remains bound to the aminoacyl-tRNA.EF-Tu.GTP complex up to the GTP hydrolysis stage on the ribosome.</text>
</comment>
<comment type="subcellular location">
    <subcellularLocation>
        <location evidence="1">Cytoplasm</location>
    </subcellularLocation>
</comment>
<comment type="similarity">
    <text evidence="1">Belongs to the EF-Ts family.</text>
</comment>
<keyword id="KW-0963">Cytoplasm</keyword>
<keyword id="KW-0251">Elongation factor</keyword>
<keyword id="KW-0648">Protein biosynthesis</keyword>
<keyword id="KW-1185">Reference proteome</keyword>
<gene>
    <name evidence="1" type="primary">tsf</name>
    <name type="ordered locus">cauri_1561</name>
</gene>
<evidence type="ECO:0000255" key="1">
    <source>
        <dbReference type="HAMAP-Rule" id="MF_00050"/>
    </source>
</evidence>